<evidence type="ECO:0000255" key="1">
    <source>
        <dbReference type="HAMAP-Rule" id="MF_01690"/>
    </source>
</evidence>
<feature type="chain" id="PRO_0000375758" description="Succinyl-diaminopimelate desuccinylase">
    <location>
        <begin position="1"/>
        <end position="375"/>
    </location>
</feature>
<feature type="active site" evidence="1">
    <location>
        <position position="68"/>
    </location>
</feature>
<feature type="active site" description="Proton acceptor" evidence="1">
    <location>
        <position position="133"/>
    </location>
</feature>
<feature type="binding site" evidence="1">
    <location>
        <position position="66"/>
    </location>
    <ligand>
        <name>Zn(2+)</name>
        <dbReference type="ChEBI" id="CHEBI:29105"/>
        <label>1</label>
    </ligand>
</feature>
<feature type="binding site" evidence="1">
    <location>
        <position position="99"/>
    </location>
    <ligand>
        <name>Zn(2+)</name>
        <dbReference type="ChEBI" id="CHEBI:29105"/>
        <label>1</label>
    </ligand>
</feature>
<feature type="binding site" evidence="1">
    <location>
        <position position="99"/>
    </location>
    <ligand>
        <name>Zn(2+)</name>
        <dbReference type="ChEBI" id="CHEBI:29105"/>
        <label>2</label>
    </ligand>
</feature>
<feature type="binding site" evidence="1">
    <location>
        <position position="134"/>
    </location>
    <ligand>
        <name>Zn(2+)</name>
        <dbReference type="ChEBI" id="CHEBI:29105"/>
        <label>2</label>
    </ligand>
</feature>
<feature type="binding site" evidence="1">
    <location>
        <position position="162"/>
    </location>
    <ligand>
        <name>Zn(2+)</name>
        <dbReference type="ChEBI" id="CHEBI:29105"/>
        <label>1</label>
    </ligand>
</feature>
<feature type="binding site" evidence="1">
    <location>
        <position position="348"/>
    </location>
    <ligand>
        <name>Zn(2+)</name>
        <dbReference type="ChEBI" id="CHEBI:29105"/>
        <label>2</label>
    </ligand>
</feature>
<dbReference type="EC" id="3.5.1.18" evidence="1"/>
<dbReference type="EMBL" id="CP001111">
    <property type="protein sequence ID" value="ACF50983.1"/>
    <property type="molecule type" value="Genomic_DNA"/>
</dbReference>
<dbReference type="RefSeq" id="WP_012510523.1">
    <property type="nucleotide sequence ID" value="NC_011071.1"/>
</dbReference>
<dbReference type="SMR" id="B4SQ35"/>
<dbReference type="STRING" id="391008.Smal_1278"/>
<dbReference type="KEGG" id="smt:Smal_1278"/>
<dbReference type="eggNOG" id="COG0624">
    <property type="taxonomic scope" value="Bacteria"/>
</dbReference>
<dbReference type="HOGENOM" id="CLU_021802_4_0_6"/>
<dbReference type="OrthoDB" id="9809784at2"/>
<dbReference type="UniPathway" id="UPA00034">
    <property type="reaction ID" value="UER00021"/>
</dbReference>
<dbReference type="Proteomes" id="UP000001867">
    <property type="component" value="Chromosome"/>
</dbReference>
<dbReference type="GO" id="GO:0008777">
    <property type="term" value="F:acetylornithine deacetylase activity"/>
    <property type="evidence" value="ECO:0007669"/>
    <property type="project" value="TreeGrafter"/>
</dbReference>
<dbReference type="GO" id="GO:0050897">
    <property type="term" value="F:cobalt ion binding"/>
    <property type="evidence" value="ECO:0007669"/>
    <property type="project" value="UniProtKB-UniRule"/>
</dbReference>
<dbReference type="GO" id="GO:0009014">
    <property type="term" value="F:succinyl-diaminopimelate desuccinylase activity"/>
    <property type="evidence" value="ECO:0007669"/>
    <property type="project" value="UniProtKB-UniRule"/>
</dbReference>
<dbReference type="GO" id="GO:0008270">
    <property type="term" value="F:zinc ion binding"/>
    <property type="evidence" value="ECO:0007669"/>
    <property type="project" value="UniProtKB-UniRule"/>
</dbReference>
<dbReference type="GO" id="GO:0019877">
    <property type="term" value="P:diaminopimelate biosynthetic process"/>
    <property type="evidence" value="ECO:0007669"/>
    <property type="project" value="UniProtKB-UniRule"/>
</dbReference>
<dbReference type="GO" id="GO:0006526">
    <property type="term" value="P:L-arginine biosynthetic process"/>
    <property type="evidence" value="ECO:0007669"/>
    <property type="project" value="TreeGrafter"/>
</dbReference>
<dbReference type="GO" id="GO:0009089">
    <property type="term" value="P:lysine biosynthetic process via diaminopimelate"/>
    <property type="evidence" value="ECO:0007669"/>
    <property type="project" value="UniProtKB-UniRule"/>
</dbReference>
<dbReference type="CDD" id="cd03891">
    <property type="entry name" value="M20_DapE_proteobac"/>
    <property type="match status" value="1"/>
</dbReference>
<dbReference type="FunFam" id="3.30.70.360:FF:000011">
    <property type="entry name" value="Succinyl-diaminopimelate desuccinylase"/>
    <property type="match status" value="1"/>
</dbReference>
<dbReference type="FunFam" id="3.40.630.10:FF:000005">
    <property type="entry name" value="Succinyl-diaminopimelate desuccinylase"/>
    <property type="match status" value="1"/>
</dbReference>
<dbReference type="Gene3D" id="1.10.150.900">
    <property type="match status" value="1"/>
</dbReference>
<dbReference type="Gene3D" id="3.30.70.360">
    <property type="match status" value="1"/>
</dbReference>
<dbReference type="Gene3D" id="3.40.630.10">
    <property type="entry name" value="Zn peptidases"/>
    <property type="match status" value="1"/>
</dbReference>
<dbReference type="HAMAP" id="MF_01690">
    <property type="entry name" value="DapE"/>
    <property type="match status" value="1"/>
</dbReference>
<dbReference type="InterPro" id="IPR001261">
    <property type="entry name" value="ArgE/DapE_CS"/>
</dbReference>
<dbReference type="InterPro" id="IPR036264">
    <property type="entry name" value="Bact_exopeptidase_dim_dom"/>
</dbReference>
<dbReference type="InterPro" id="IPR005941">
    <property type="entry name" value="DapE_proteobac"/>
</dbReference>
<dbReference type="InterPro" id="IPR002933">
    <property type="entry name" value="Peptidase_M20"/>
</dbReference>
<dbReference type="InterPro" id="IPR011650">
    <property type="entry name" value="Peptidase_M20_dimer"/>
</dbReference>
<dbReference type="InterPro" id="IPR050072">
    <property type="entry name" value="Peptidase_M20A"/>
</dbReference>
<dbReference type="NCBIfam" id="TIGR01246">
    <property type="entry name" value="dapE_proteo"/>
    <property type="match status" value="1"/>
</dbReference>
<dbReference type="NCBIfam" id="NF009557">
    <property type="entry name" value="PRK13009.1"/>
    <property type="match status" value="1"/>
</dbReference>
<dbReference type="PANTHER" id="PTHR43808">
    <property type="entry name" value="ACETYLORNITHINE DEACETYLASE"/>
    <property type="match status" value="1"/>
</dbReference>
<dbReference type="PANTHER" id="PTHR43808:SF31">
    <property type="entry name" value="N-ACETYL-L-CITRULLINE DEACETYLASE"/>
    <property type="match status" value="1"/>
</dbReference>
<dbReference type="Pfam" id="PF07687">
    <property type="entry name" value="M20_dimer"/>
    <property type="match status" value="1"/>
</dbReference>
<dbReference type="Pfam" id="PF01546">
    <property type="entry name" value="Peptidase_M20"/>
    <property type="match status" value="1"/>
</dbReference>
<dbReference type="SUPFAM" id="SSF55031">
    <property type="entry name" value="Bacterial exopeptidase dimerisation domain"/>
    <property type="match status" value="1"/>
</dbReference>
<dbReference type="SUPFAM" id="SSF53187">
    <property type="entry name" value="Zn-dependent exopeptidases"/>
    <property type="match status" value="1"/>
</dbReference>
<dbReference type="PROSITE" id="PS00759">
    <property type="entry name" value="ARGE_DAPE_CPG2_2"/>
    <property type="match status" value="1"/>
</dbReference>
<comment type="function">
    <text evidence="1">Catalyzes the hydrolysis of N-succinyl-L,L-diaminopimelic acid (SDAP), forming succinate and LL-2,6-diaminopimelate (DAP), an intermediate involved in the bacterial biosynthesis of lysine and meso-diaminopimelic acid, an essential component of bacterial cell walls.</text>
</comment>
<comment type="catalytic activity">
    <reaction evidence="1">
        <text>N-succinyl-(2S,6S)-2,6-diaminopimelate + H2O = (2S,6S)-2,6-diaminopimelate + succinate</text>
        <dbReference type="Rhea" id="RHEA:22608"/>
        <dbReference type="ChEBI" id="CHEBI:15377"/>
        <dbReference type="ChEBI" id="CHEBI:30031"/>
        <dbReference type="ChEBI" id="CHEBI:57609"/>
        <dbReference type="ChEBI" id="CHEBI:58087"/>
        <dbReference type="EC" id="3.5.1.18"/>
    </reaction>
</comment>
<comment type="cofactor">
    <cofactor evidence="1">
        <name>Zn(2+)</name>
        <dbReference type="ChEBI" id="CHEBI:29105"/>
    </cofactor>
    <cofactor evidence="1">
        <name>Co(2+)</name>
        <dbReference type="ChEBI" id="CHEBI:48828"/>
    </cofactor>
    <text evidence="1">Binds 2 Zn(2+) or Co(2+) ions per subunit.</text>
</comment>
<comment type="pathway">
    <text evidence="1">Amino-acid biosynthesis; L-lysine biosynthesis via DAP pathway; LL-2,6-diaminopimelate from (S)-tetrahydrodipicolinate (succinylase route): step 3/3.</text>
</comment>
<comment type="subunit">
    <text evidence="1">Homodimer.</text>
</comment>
<comment type="similarity">
    <text evidence="1">Belongs to the peptidase M20A family. DapE subfamily.</text>
</comment>
<protein>
    <recommendedName>
        <fullName evidence="1">Succinyl-diaminopimelate desuccinylase</fullName>
        <shortName evidence="1">SDAP desuccinylase</shortName>
        <ecNumber evidence="1">3.5.1.18</ecNumber>
    </recommendedName>
    <alternativeName>
        <fullName evidence="1">N-succinyl-LL-2,6-diaminoheptanedioate amidohydrolase</fullName>
    </alternativeName>
</protein>
<organism>
    <name type="scientific">Stenotrophomonas maltophilia (strain R551-3)</name>
    <dbReference type="NCBI Taxonomy" id="391008"/>
    <lineage>
        <taxon>Bacteria</taxon>
        <taxon>Pseudomonadati</taxon>
        <taxon>Pseudomonadota</taxon>
        <taxon>Gammaproteobacteria</taxon>
        <taxon>Lysobacterales</taxon>
        <taxon>Lysobacteraceae</taxon>
        <taxon>Stenotrophomonas</taxon>
        <taxon>Stenotrophomonas maltophilia group</taxon>
    </lineage>
</organism>
<proteinExistence type="inferred from homology"/>
<reference key="1">
    <citation type="submission" date="2008-06" db="EMBL/GenBank/DDBJ databases">
        <title>Complete sequence of Stenotrophomonas maltophilia R551-3.</title>
        <authorList>
            <consortium name="US DOE Joint Genome Institute"/>
            <person name="Lucas S."/>
            <person name="Copeland A."/>
            <person name="Lapidus A."/>
            <person name="Glavina del Rio T."/>
            <person name="Dalin E."/>
            <person name="Tice H."/>
            <person name="Pitluck S."/>
            <person name="Chain P."/>
            <person name="Malfatti S."/>
            <person name="Shin M."/>
            <person name="Vergez L."/>
            <person name="Lang D."/>
            <person name="Schmutz J."/>
            <person name="Larimer F."/>
            <person name="Land M."/>
            <person name="Hauser L."/>
            <person name="Kyrpides N."/>
            <person name="Mikhailova N."/>
            <person name="Taghavi S."/>
            <person name="Monchy S."/>
            <person name="Newman L."/>
            <person name="Vangronsveld J."/>
            <person name="van der Lelie D."/>
            <person name="Richardson P."/>
        </authorList>
    </citation>
    <scope>NUCLEOTIDE SEQUENCE [LARGE SCALE GENOMIC DNA]</scope>
    <source>
        <strain>R551-3</strain>
    </source>
</reference>
<name>DAPE_STRM5</name>
<keyword id="KW-0028">Amino-acid biosynthesis</keyword>
<keyword id="KW-0170">Cobalt</keyword>
<keyword id="KW-0220">Diaminopimelate biosynthesis</keyword>
<keyword id="KW-0378">Hydrolase</keyword>
<keyword id="KW-0457">Lysine biosynthesis</keyword>
<keyword id="KW-0479">Metal-binding</keyword>
<keyword id="KW-0862">Zinc</keyword>
<sequence length="375" mass="40425">MSAVLDLTCELIARPSVTPDDAGCQTLLAARLKQAGFQCDHLRLGEVDNLWATHGQGAPVLVLLGHTDVVPPGPREAWASDPFTPQIREGVLYGRGTADMKGSVAAFVVAAEQFVAAHPDHTGTLAVLLTSDEEGDAIDGVRHVARLFAERGQRIDWCITGEPSSTATLGDLLRVGRRGSLSAKLRVQGVQGHVAYPEKARNPIHQAAPALAELSARRWDDGYESFPPTSLQISNIHAGTGANNVIPGELEVDFNIRYNPHWDAPKLEAEITALLDQHGLQYTLKWHRSGEPFYTPEGTLRATARAVLAEHIGRAPEESTGGGTSDARFIAPLGAQCIEVGPVNASIHQVDENVRVDELEALPGLYQRLVERLLV</sequence>
<accession>B4SQ35</accession>
<gene>
    <name evidence="1" type="primary">dapE</name>
    <name type="ordered locus">Smal_1278</name>
</gene>